<protein>
    <recommendedName>
        <fullName evidence="1">2-aminoethylphosphonate--pyruvate transaminase</fullName>
        <ecNumber evidence="1">2.6.1.37</ecNumber>
    </recommendedName>
    <alternativeName>
        <fullName evidence="1">2-aminoethylphosphonate aminotransferase</fullName>
    </alternativeName>
    <alternativeName>
        <fullName evidence="1">AEP transaminase</fullName>
        <shortName evidence="1">AEPT</shortName>
    </alternativeName>
</protein>
<gene>
    <name evidence="1" type="primary">phnW</name>
    <name type="ordered locus">BVU_3006</name>
</gene>
<feature type="chain" id="PRO_1000068242" description="2-aminoethylphosphonate--pyruvate transaminase">
    <location>
        <begin position="1"/>
        <end position="362"/>
    </location>
</feature>
<feature type="modified residue" description="N6-(pyridoxal phosphate)lysine" evidence="1">
    <location>
        <position position="193"/>
    </location>
</feature>
<dbReference type="EC" id="2.6.1.37" evidence="1"/>
<dbReference type="EMBL" id="CP000139">
    <property type="protein sequence ID" value="ABR40644.1"/>
    <property type="molecule type" value="Genomic_DNA"/>
</dbReference>
<dbReference type="RefSeq" id="WP_012055510.1">
    <property type="nucleotide sequence ID" value="NZ_CAXVNH010000042.1"/>
</dbReference>
<dbReference type="SMR" id="A6L4N0"/>
<dbReference type="STRING" id="435590.BVU_3006"/>
<dbReference type="PaxDb" id="435590-BVU_3006"/>
<dbReference type="GeneID" id="5303967"/>
<dbReference type="KEGG" id="bvu:BVU_3006"/>
<dbReference type="eggNOG" id="COG0075">
    <property type="taxonomic scope" value="Bacteria"/>
</dbReference>
<dbReference type="HOGENOM" id="CLU_027686_3_1_10"/>
<dbReference type="BioCyc" id="BVUL435590:G1G59-3129-MONOMER"/>
<dbReference type="Proteomes" id="UP000002861">
    <property type="component" value="Chromosome"/>
</dbReference>
<dbReference type="GO" id="GO:0047304">
    <property type="term" value="F:2-aminoethylphosphonate-pyruvate transaminase activity"/>
    <property type="evidence" value="ECO:0007669"/>
    <property type="project" value="UniProtKB-UniRule"/>
</dbReference>
<dbReference type="GO" id="GO:0019700">
    <property type="term" value="P:organic phosphonate catabolic process"/>
    <property type="evidence" value="ECO:0007669"/>
    <property type="project" value="InterPro"/>
</dbReference>
<dbReference type="Gene3D" id="3.90.1150.10">
    <property type="entry name" value="Aspartate Aminotransferase, domain 1"/>
    <property type="match status" value="1"/>
</dbReference>
<dbReference type="Gene3D" id="3.40.640.10">
    <property type="entry name" value="Type I PLP-dependent aspartate aminotransferase-like (Major domain)"/>
    <property type="match status" value="1"/>
</dbReference>
<dbReference type="HAMAP" id="MF_01376">
    <property type="entry name" value="PhnW_aminotrans_5"/>
    <property type="match status" value="1"/>
</dbReference>
<dbReference type="InterPro" id="IPR000192">
    <property type="entry name" value="Aminotrans_V_dom"/>
</dbReference>
<dbReference type="InterPro" id="IPR012703">
    <property type="entry name" value="NH2EtPonate_pyrv_transaminase"/>
</dbReference>
<dbReference type="InterPro" id="IPR015424">
    <property type="entry name" value="PyrdxlP-dep_Trfase"/>
</dbReference>
<dbReference type="InterPro" id="IPR015421">
    <property type="entry name" value="PyrdxlP-dep_Trfase_major"/>
</dbReference>
<dbReference type="InterPro" id="IPR015422">
    <property type="entry name" value="PyrdxlP-dep_Trfase_small"/>
</dbReference>
<dbReference type="InterPro" id="IPR024169">
    <property type="entry name" value="SP_NH2Trfase/AEP_transaminase"/>
</dbReference>
<dbReference type="NCBIfam" id="TIGR03301">
    <property type="entry name" value="PhnW-AepZ"/>
    <property type="match status" value="1"/>
</dbReference>
<dbReference type="NCBIfam" id="NF010006">
    <property type="entry name" value="PRK13479.1"/>
    <property type="match status" value="1"/>
</dbReference>
<dbReference type="NCBIfam" id="TIGR02326">
    <property type="entry name" value="transamin_PhnW"/>
    <property type="match status" value="1"/>
</dbReference>
<dbReference type="PANTHER" id="PTHR42778">
    <property type="entry name" value="2-AMINOETHYLPHOSPHONATE--PYRUVATE TRANSAMINASE"/>
    <property type="match status" value="1"/>
</dbReference>
<dbReference type="PANTHER" id="PTHR42778:SF1">
    <property type="entry name" value="2-AMINOETHYLPHOSPHONATE--PYRUVATE TRANSAMINASE"/>
    <property type="match status" value="1"/>
</dbReference>
<dbReference type="Pfam" id="PF00266">
    <property type="entry name" value="Aminotran_5"/>
    <property type="match status" value="1"/>
</dbReference>
<dbReference type="PIRSF" id="PIRSF000524">
    <property type="entry name" value="SPT"/>
    <property type="match status" value="1"/>
</dbReference>
<dbReference type="SUPFAM" id="SSF53383">
    <property type="entry name" value="PLP-dependent transferases"/>
    <property type="match status" value="1"/>
</dbReference>
<name>PHNW_PHOV8</name>
<reference key="1">
    <citation type="journal article" date="2007" name="PLoS Biol.">
        <title>Evolution of symbiotic bacteria in the distal human intestine.</title>
        <authorList>
            <person name="Xu J."/>
            <person name="Mahowald M.A."/>
            <person name="Ley R.E."/>
            <person name="Lozupone C.A."/>
            <person name="Hamady M."/>
            <person name="Martens E.C."/>
            <person name="Henrissat B."/>
            <person name="Coutinho P.M."/>
            <person name="Minx P."/>
            <person name="Latreille P."/>
            <person name="Cordum H."/>
            <person name="Van Brunt A."/>
            <person name="Kim K."/>
            <person name="Fulton R.S."/>
            <person name="Fulton L.A."/>
            <person name="Clifton S.W."/>
            <person name="Wilson R.K."/>
            <person name="Knight R.D."/>
            <person name="Gordon J.I."/>
        </authorList>
    </citation>
    <scope>NUCLEOTIDE SEQUENCE [LARGE SCALE GENOMIC DNA]</scope>
    <source>
        <strain>ATCC 8482 / DSM 1447 / JCM 5826 / CCUG 4940 / NBRC 14291 / NCTC 11154</strain>
    </source>
</reference>
<comment type="function">
    <text evidence="1">Involved in phosphonate degradation.</text>
</comment>
<comment type="catalytic activity">
    <reaction evidence="1">
        <text>(2-aminoethyl)phosphonate + pyruvate = phosphonoacetaldehyde + L-alanine</text>
        <dbReference type="Rhea" id="RHEA:17021"/>
        <dbReference type="ChEBI" id="CHEBI:15361"/>
        <dbReference type="ChEBI" id="CHEBI:57418"/>
        <dbReference type="ChEBI" id="CHEBI:57972"/>
        <dbReference type="ChEBI" id="CHEBI:58383"/>
        <dbReference type="EC" id="2.6.1.37"/>
    </reaction>
</comment>
<comment type="cofactor">
    <cofactor evidence="1">
        <name>pyridoxal 5'-phosphate</name>
        <dbReference type="ChEBI" id="CHEBI:597326"/>
    </cofactor>
</comment>
<comment type="subunit">
    <text evidence="1">Homodimer.</text>
</comment>
<comment type="similarity">
    <text evidence="1">Belongs to the class-V pyridoxal-phosphate-dependent aminotransferase family. PhnW subfamily.</text>
</comment>
<keyword id="KW-0032">Aminotransferase</keyword>
<keyword id="KW-0663">Pyridoxal phosphate</keyword>
<keyword id="KW-0670">Pyruvate</keyword>
<keyword id="KW-0808">Transferase</keyword>
<sequence>MRPYLLLTPGPLTTSESVKTAMMTDWCTWDEDYNVHIVEEIRKGLVQLATRKTDEYTSILMQGSGTYCVEATLGSVITPKHKLLILSNGAYGDRMGNIAEYHEMNYDMLAFDETEQVSVEYVDDYLAHNAEITHVAVVHCETTTGILNPLKEIAHMVKMHGKKLIVDAMSSFGGVPLDVEELGIDFMISSANKCIQGVPGFGFIIARKSELQYCKGVSKSLSLDIYDQWDAMEKGHGKWRFTSPTHVVRAFKQAMDELAAEGGVEARHARYCRNHDVLVEGMRSLGFKTLLKDEVQSPVITSFLYPDKEFDFKEFYHQLKEKGFVIYPGKISQADTFRIGNIGDVFPEDFSRLIEAIKTVAK</sequence>
<organism>
    <name type="scientific">Phocaeicola vulgatus (strain ATCC 8482 / DSM 1447 / JCM 5826 / CCUG 4940 / NBRC 14291 / NCTC 11154)</name>
    <name type="common">Bacteroides vulgatus</name>
    <dbReference type="NCBI Taxonomy" id="435590"/>
    <lineage>
        <taxon>Bacteria</taxon>
        <taxon>Pseudomonadati</taxon>
        <taxon>Bacteroidota</taxon>
        <taxon>Bacteroidia</taxon>
        <taxon>Bacteroidales</taxon>
        <taxon>Bacteroidaceae</taxon>
        <taxon>Phocaeicola</taxon>
    </lineage>
</organism>
<evidence type="ECO:0000255" key="1">
    <source>
        <dbReference type="HAMAP-Rule" id="MF_01376"/>
    </source>
</evidence>
<proteinExistence type="inferred from homology"/>
<accession>A6L4N0</accession>